<name>PUR5_STRP4</name>
<keyword id="KW-0067">ATP-binding</keyword>
<keyword id="KW-0963">Cytoplasm</keyword>
<keyword id="KW-0436">Ligase</keyword>
<keyword id="KW-0547">Nucleotide-binding</keyword>
<keyword id="KW-0658">Purine biosynthesis</keyword>
<dbReference type="EC" id="6.3.3.1" evidence="1"/>
<dbReference type="EMBL" id="CP001015">
    <property type="protein sequence ID" value="ACF56494.1"/>
    <property type="molecule type" value="Genomic_DNA"/>
</dbReference>
<dbReference type="KEGG" id="spx:SPG_0053"/>
<dbReference type="HOGENOM" id="CLU_047116_0_0_9"/>
<dbReference type="UniPathway" id="UPA00074">
    <property type="reaction ID" value="UER00129"/>
</dbReference>
<dbReference type="GO" id="GO:0005829">
    <property type="term" value="C:cytosol"/>
    <property type="evidence" value="ECO:0007669"/>
    <property type="project" value="TreeGrafter"/>
</dbReference>
<dbReference type="GO" id="GO:0005524">
    <property type="term" value="F:ATP binding"/>
    <property type="evidence" value="ECO:0007669"/>
    <property type="project" value="UniProtKB-KW"/>
</dbReference>
<dbReference type="GO" id="GO:0004637">
    <property type="term" value="F:phosphoribosylamine-glycine ligase activity"/>
    <property type="evidence" value="ECO:0007669"/>
    <property type="project" value="TreeGrafter"/>
</dbReference>
<dbReference type="GO" id="GO:0004641">
    <property type="term" value="F:phosphoribosylformylglycinamidine cyclo-ligase activity"/>
    <property type="evidence" value="ECO:0007669"/>
    <property type="project" value="UniProtKB-UniRule"/>
</dbReference>
<dbReference type="GO" id="GO:0006189">
    <property type="term" value="P:'de novo' IMP biosynthetic process"/>
    <property type="evidence" value="ECO:0007669"/>
    <property type="project" value="UniProtKB-UniRule"/>
</dbReference>
<dbReference type="GO" id="GO:0046084">
    <property type="term" value="P:adenine biosynthetic process"/>
    <property type="evidence" value="ECO:0007669"/>
    <property type="project" value="TreeGrafter"/>
</dbReference>
<dbReference type="CDD" id="cd02196">
    <property type="entry name" value="PurM"/>
    <property type="match status" value="1"/>
</dbReference>
<dbReference type="FunFam" id="3.30.1330.10:FF:000001">
    <property type="entry name" value="Phosphoribosylformylglycinamidine cyclo-ligase"/>
    <property type="match status" value="1"/>
</dbReference>
<dbReference type="FunFam" id="3.90.650.10:FF:000011">
    <property type="entry name" value="Phosphoribosylformylglycinamidine cyclo-ligase"/>
    <property type="match status" value="1"/>
</dbReference>
<dbReference type="Gene3D" id="3.90.650.10">
    <property type="entry name" value="PurM-like C-terminal domain"/>
    <property type="match status" value="1"/>
</dbReference>
<dbReference type="Gene3D" id="3.30.1330.10">
    <property type="entry name" value="PurM-like, N-terminal domain"/>
    <property type="match status" value="1"/>
</dbReference>
<dbReference type="HAMAP" id="MF_00741">
    <property type="entry name" value="AIRS"/>
    <property type="match status" value="1"/>
</dbReference>
<dbReference type="InterPro" id="IPR010918">
    <property type="entry name" value="PurM-like_C_dom"/>
</dbReference>
<dbReference type="InterPro" id="IPR036676">
    <property type="entry name" value="PurM-like_C_sf"/>
</dbReference>
<dbReference type="InterPro" id="IPR016188">
    <property type="entry name" value="PurM-like_N"/>
</dbReference>
<dbReference type="InterPro" id="IPR036921">
    <property type="entry name" value="PurM-like_N_sf"/>
</dbReference>
<dbReference type="InterPro" id="IPR004733">
    <property type="entry name" value="PurM_cligase"/>
</dbReference>
<dbReference type="NCBIfam" id="TIGR00878">
    <property type="entry name" value="purM"/>
    <property type="match status" value="1"/>
</dbReference>
<dbReference type="PANTHER" id="PTHR10520:SF12">
    <property type="entry name" value="TRIFUNCTIONAL PURINE BIOSYNTHETIC PROTEIN ADENOSINE-3"/>
    <property type="match status" value="1"/>
</dbReference>
<dbReference type="PANTHER" id="PTHR10520">
    <property type="entry name" value="TRIFUNCTIONAL PURINE BIOSYNTHETIC PROTEIN ADENOSINE-3-RELATED"/>
    <property type="match status" value="1"/>
</dbReference>
<dbReference type="Pfam" id="PF00586">
    <property type="entry name" value="AIRS"/>
    <property type="match status" value="1"/>
</dbReference>
<dbReference type="Pfam" id="PF02769">
    <property type="entry name" value="AIRS_C"/>
    <property type="match status" value="1"/>
</dbReference>
<dbReference type="SUPFAM" id="SSF56042">
    <property type="entry name" value="PurM C-terminal domain-like"/>
    <property type="match status" value="1"/>
</dbReference>
<dbReference type="SUPFAM" id="SSF55326">
    <property type="entry name" value="PurM N-terminal domain-like"/>
    <property type="match status" value="1"/>
</dbReference>
<gene>
    <name evidence="1" type="primary">purM</name>
    <name type="ordered locus">SPG_0053</name>
</gene>
<protein>
    <recommendedName>
        <fullName evidence="1">Phosphoribosylformylglycinamidine cyclo-ligase</fullName>
        <ecNumber evidence="1">6.3.3.1</ecNumber>
    </recommendedName>
    <alternativeName>
        <fullName evidence="1">AIR synthase</fullName>
    </alternativeName>
    <alternativeName>
        <fullName evidence="1">AIRS</fullName>
    </alternativeName>
    <alternativeName>
        <fullName evidence="1">Phosphoribosyl-aminoimidazole synthetase</fullName>
    </alternativeName>
</protein>
<feature type="chain" id="PRO_1000193049" description="Phosphoribosylformylglycinamidine cyclo-ligase">
    <location>
        <begin position="1"/>
        <end position="340"/>
    </location>
</feature>
<comment type="catalytic activity">
    <reaction evidence="1">
        <text>2-formamido-N(1)-(5-O-phospho-beta-D-ribosyl)acetamidine + ATP = 5-amino-1-(5-phospho-beta-D-ribosyl)imidazole + ADP + phosphate + H(+)</text>
        <dbReference type="Rhea" id="RHEA:23032"/>
        <dbReference type="ChEBI" id="CHEBI:15378"/>
        <dbReference type="ChEBI" id="CHEBI:30616"/>
        <dbReference type="ChEBI" id="CHEBI:43474"/>
        <dbReference type="ChEBI" id="CHEBI:137981"/>
        <dbReference type="ChEBI" id="CHEBI:147287"/>
        <dbReference type="ChEBI" id="CHEBI:456216"/>
        <dbReference type="EC" id="6.3.3.1"/>
    </reaction>
</comment>
<comment type="pathway">
    <text evidence="1">Purine metabolism; IMP biosynthesis via de novo pathway; 5-amino-1-(5-phospho-D-ribosyl)imidazole from N(2)-formyl-N(1)-(5-phospho-D-ribosyl)glycinamide: step 2/2.</text>
</comment>
<comment type="subcellular location">
    <subcellularLocation>
        <location evidence="1">Cytoplasm</location>
    </subcellularLocation>
</comment>
<comment type="similarity">
    <text evidence="1">Belongs to the AIR synthase family.</text>
</comment>
<sequence length="340" mass="36584">MTNKNAYAQSGVDVEAGYEVVERIKKHVARTERAGVMGALGGFGGMFDLSKTGVKEPVLISGTDGVGTKLMLAIKYDKHDTIGQDCVAMCVNDIIAAGAEPLYFLDYVATXKNEPAKLEQVVAGVAEGCVQAGAALIGGETAEMPGMYGEDDYDLAGFAVGVAEKSQIIDGSKVVEGDVLLGLVSSGIHSNGYSLVRRVFADYTGEEVLPELEGKKLKEVLLEPTRIYVKAVLPLIKEELVNGIAHITGGGFIENVPRMFADDLAAEIDESKVPVLPIFKALEKYGQIKHEEMFEIFNMGVGLMLAVSPENVERVKELLDEAVYEIGRIVKKENESVIIK</sequence>
<accession>B5E5J6</accession>
<proteinExistence type="inferred from homology"/>
<evidence type="ECO:0000255" key="1">
    <source>
        <dbReference type="HAMAP-Rule" id="MF_00741"/>
    </source>
</evidence>
<reference key="1">
    <citation type="journal article" date="2001" name="Microb. Drug Resist.">
        <title>Annotated draft genomic sequence from a Streptococcus pneumoniae type 19F clinical isolate.</title>
        <authorList>
            <person name="Dopazo J."/>
            <person name="Mendoza A."/>
            <person name="Herrero J."/>
            <person name="Caldara F."/>
            <person name="Humbert Y."/>
            <person name="Friedli L."/>
            <person name="Guerrier M."/>
            <person name="Grand-Schenk E."/>
            <person name="Gandin C."/>
            <person name="de Francesco M."/>
            <person name="Polissi A."/>
            <person name="Buell G."/>
            <person name="Feger G."/>
            <person name="Garcia E."/>
            <person name="Peitsch M."/>
            <person name="Garcia-Bustos J.F."/>
        </authorList>
    </citation>
    <scope>NUCLEOTIDE SEQUENCE [LARGE SCALE GENOMIC DNA]</scope>
    <source>
        <strain>G54</strain>
    </source>
</reference>
<reference key="2">
    <citation type="submission" date="2008-03" db="EMBL/GenBank/DDBJ databases">
        <title>Pneumococcal beta glucoside metabolism investigated by whole genome comparison.</title>
        <authorList>
            <person name="Mulas L."/>
            <person name="Trappetti C."/>
            <person name="Hakenbeck R."/>
            <person name="Iannelli F."/>
            <person name="Pozzi G."/>
            <person name="Davidsen T.M."/>
            <person name="Tettelin H."/>
            <person name="Oggioni M."/>
        </authorList>
    </citation>
    <scope>NUCLEOTIDE SEQUENCE [LARGE SCALE GENOMIC DNA]</scope>
    <source>
        <strain>G54</strain>
    </source>
</reference>
<organism>
    <name type="scientific">Streptococcus pneumoniae serotype 19F (strain G54)</name>
    <dbReference type="NCBI Taxonomy" id="512566"/>
    <lineage>
        <taxon>Bacteria</taxon>
        <taxon>Bacillati</taxon>
        <taxon>Bacillota</taxon>
        <taxon>Bacilli</taxon>
        <taxon>Lactobacillales</taxon>
        <taxon>Streptococcaceae</taxon>
        <taxon>Streptococcus</taxon>
    </lineage>
</organism>